<name>PEPA_TALSN</name>
<feature type="signal peptide" evidence="4">
    <location>
        <begin position="1"/>
        <end position="19"/>
    </location>
</feature>
<feature type="propeptide" id="PRO_0000407061" description="Activation peptide" evidence="3">
    <location>
        <begin position="20"/>
        <end position="66"/>
    </location>
</feature>
<feature type="chain" id="PRO_0000407062" description="Penicillopepsin-1">
    <location>
        <begin position="67"/>
        <end position="387"/>
    </location>
</feature>
<feature type="domain" description="Peptidase A1" evidence="6">
    <location>
        <begin position="85"/>
        <end position="384"/>
    </location>
</feature>
<feature type="active site" evidence="6">
    <location>
        <position position="101"/>
    </location>
</feature>
<feature type="active site" evidence="6">
    <location>
        <position position="279"/>
    </location>
</feature>
<feature type="glycosylation site" description="N-linked (GlcNAc...) asparagine" evidence="5">
    <location>
        <position position="304"/>
    </location>
</feature>
<feature type="disulfide bond" evidence="6">
    <location>
        <begin position="315"/>
        <end position="347"/>
    </location>
</feature>
<protein>
    <recommendedName>
        <fullName evidence="7">Penicillopepsin-1</fullName>
        <ecNumber evidence="1">3.4.23.20</ecNumber>
    </recommendedName>
    <alternativeName>
        <fullName>Aspartic protease pepA</fullName>
    </alternativeName>
</protein>
<gene>
    <name type="primary">pepA</name>
    <name type="ORF">TSTA_012870</name>
</gene>
<evidence type="ECO:0000250" key="1">
    <source>
        <dbReference type="UniProtKB" id="P00798"/>
    </source>
</evidence>
<evidence type="ECO:0000250" key="2">
    <source>
        <dbReference type="UniProtKB" id="Q01972"/>
    </source>
</evidence>
<evidence type="ECO:0000250" key="3">
    <source>
        <dbReference type="UniProtKB" id="Q12567"/>
    </source>
</evidence>
<evidence type="ECO:0000255" key="4"/>
<evidence type="ECO:0000255" key="5">
    <source>
        <dbReference type="PROSITE-ProRule" id="PRU00498"/>
    </source>
</evidence>
<evidence type="ECO:0000255" key="6">
    <source>
        <dbReference type="PROSITE-ProRule" id="PRU01103"/>
    </source>
</evidence>
<evidence type="ECO:0000305" key="7"/>
<reference key="1">
    <citation type="journal article" date="2015" name="Genome Announc.">
        <title>Genome sequence of the AIDS-associated pathogen Penicillium marneffei (ATCC18224) and its near taxonomic relative Talaromyces stipitatus (ATCC10500).</title>
        <authorList>
            <person name="Nierman W.C."/>
            <person name="Fedorova-Abrams N.D."/>
            <person name="Andrianopoulos A."/>
        </authorList>
    </citation>
    <scope>NUCLEOTIDE SEQUENCE [LARGE SCALE GENOMIC DNA]</scope>
    <source>
        <strain>ATCC 10500 / CBS 375.48 / QM 6759 / NRRL 1006</strain>
    </source>
</reference>
<dbReference type="EC" id="3.4.23.20" evidence="1"/>
<dbReference type="EMBL" id="EQ962656">
    <property type="protein sequence ID" value="EED16180.1"/>
    <property type="molecule type" value="Genomic_DNA"/>
</dbReference>
<dbReference type="RefSeq" id="XP_002483414.1">
    <property type="nucleotide sequence ID" value="XM_002483369.1"/>
</dbReference>
<dbReference type="SMR" id="B8MF81"/>
<dbReference type="STRING" id="441959.B8MF81"/>
<dbReference type="GlyCosmos" id="B8MF81">
    <property type="glycosylation" value="1 site, No reported glycans"/>
</dbReference>
<dbReference type="GeneID" id="8108163"/>
<dbReference type="VEuPathDB" id="FungiDB:TSTA_012870"/>
<dbReference type="eggNOG" id="KOG1339">
    <property type="taxonomic scope" value="Eukaryota"/>
</dbReference>
<dbReference type="HOGENOM" id="CLU_013253_0_0_1"/>
<dbReference type="InParanoid" id="B8MF81"/>
<dbReference type="OMA" id="DEEYIGN"/>
<dbReference type="OrthoDB" id="2747330at2759"/>
<dbReference type="PhylomeDB" id="B8MF81"/>
<dbReference type="Proteomes" id="UP000001745">
    <property type="component" value="Unassembled WGS sequence"/>
</dbReference>
<dbReference type="GO" id="GO:0005576">
    <property type="term" value="C:extracellular region"/>
    <property type="evidence" value="ECO:0007669"/>
    <property type="project" value="UniProtKB-SubCell"/>
</dbReference>
<dbReference type="GO" id="GO:0004190">
    <property type="term" value="F:aspartic-type endopeptidase activity"/>
    <property type="evidence" value="ECO:0007669"/>
    <property type="project" value="UniProtKB-KW"/>
</dbReference>
<dbReference type="GO" id="GO:0006508">
    <property type="term" value="P:proteolysis"/>
    <property type="evidence" value="ECO:0007669"/>
    <property type="project" value="UniProtKB-KW"/>
</dbReference>
<dbReference type="CDD" id="cd06097">
    <property type="entry name" value="Aspergillopepsin_like"/>
    <property type="match status" value="1"/>
</dbReference>
<dbReference type="FunFam" id="2.40.70.10:FF:000024">
    <property type="entry name" value="Endothiapepsin"/>
    <property type="match status" value="1"/>
</dbReference>
<dbReference type="FunFam" id="2.40.70.10:FF:000026">
    <property type="entry name" value="Endothiapepsin"/>
    <property type="match status" value="1"/>
</dbReference>
<dbReference type="Gene3D" id="2.40.70.10">
    <property type="entry name" value="Acid Proteases"/>
    <property type="match status" value="2"/>
</dbReference>
<dbReference type="InterPro" id="IPR001461">
    <property type="entry name" value="Aspartic_peptidase_A1"/>
</dbReference>
<dbReference type="InterPro" id="IPR001969">
    <property type="entry name" value="Aspartic_peptidase_AS"/>
</dbReference>
<dbReference type="InterPro" id="IPR034163">
    <property type="entry name" value="Aspergillopepsin-like_cat_dom"/>
</dbReference>
<dbReference type="InterPro" id="IPR033121">
    <property type="entry name" value="PEPTIDASE_A1"/>
</dbReference>
<dbReference type="InterPro" id="IPR021109">
    <property type="entry name" value="Peptidase_aspartic_dom_sf"/>
</dbReference>
<dbReference type="PANTHER" id="PTHR47966:SF2">
    <property type="entry name" value="ASPERGILLOPEPSIN-1-RELATED"/>
    <property type="match status" value="1"/>
</dbReference>
<dbReference type="PANTHER" id="PTHR47966">
    <property type="entry name" value="BETA-SITE APP-CLEAVING ENZYME, ISOFORM A-RELATED"/>
    <property type="match status" value="1"/>
</dbReference>
<dbReference type="Pfam" id="PF00026">
    <property type="entry name" value="Asp"/>
    <property type="match status" value="1"/>
</dbReference>
<dbReference type="PRINTS" id="PR00792">
    <property type="entry name" value="PEPSIN"/>
</dbReference>
<dbReference type="SUPFAM" id="SSF50630">
    <property type="entry name" value="Acid proteases"/>
    <property type="match status" value="1"/>
</dbReference>
<dbReference type="PROSITE" id="PS00141">
    <property type="entry name" value="ASP_PROTEASE"/>
    <property type="match status" value="2"/>
</dbReference>
<dbReference type="PROSITE" id="PS51767">
    <property type="entry name" value="PEPTIDASE_A1"/>
    <property type="match status" value="1"/>
</dbReference>
<organism>
    <name type="scientific">Talaromyces stipitatus (strain ATCC 10500 / CBS 375.48 / QM 6759 / NRRL 1006)</name>
    <name type="common">Penicillium stipitatum</name>
    <dbReference type="NCBI Taxonomy" id="441959"/>
    <lineage>
        <taxon>Eukaryota</taxon>
        <taxon>Fungi</taxon>
        <taxon>Dikarya</taxon>
        <taxon>Ascomycota</taxon>
        <taxon>Pezizomycotina</taxon>
        <taxon>Eurotiomycetes</taxon>
        <taxon>Eurotiomycetidae</taxon>
        <taxon>Eurotiales</taxon>
        <taxon>Trichocomaceae</taxon>
        <taxon>Talaromyces</taxon>
        <taxon>Talaromyces sect. Talaromyces</taxon>
    </lineage>
</organism>
<comment type="function">
    <text evidence="1">Secreted aspartic endopeptidase that allows assimilation of proteinaceous substrates. The scissile peptide bond is attacked by a nucleophilic water molecule activated by two aspartic residues in the active site. Shows a broad primary substrate specificity. Favors hydrophobic residues at the P1 and P1' positions, but can also activate trypsinogen and hydrolyze the B chain of insulin between positions 'Gly-20' and 'Glu-21'.</text>
</comment>
<comment type="catalytic activity">
    <reaction evidence="1">
        <text>Hydrolysis of proteins with broad specificity similar to that of pepsin A, preferring hydrophobic residues at P1 and P1', but also cleaving 20-Gly-|-Glu-21 in the B chain of insulin. Clots milk, and activates trypsinogen.</text>
        <dbReference type="EC" id="3.4.23.20"/>
    </reaction>
</comment>
<comment type="subunit">
    <text evidence="3">Monomer.</text>
</comment>
<comment type="subcellular location">
    <subcellularLocation>
        <location evidence="2">Secreted</location>
    </subcellularLocation>
</comment>
<comment type="similarity">
    <text evidence="6">Belongs to the peptidase A1 family.</text>
</comment>
<proteinExistence type="inferred from homology"/>
<keyword id="KW-0064">Aspartyl protease</keyword>
<keyword id="KW-1015">Disulfide bond</keyword>
<keyword id="KW-0325">Glycoprotein</keyword>
<keyword id="KW-0378">Hydrolase</keyword>
<keyword id="KW-0645">Protease</keyword>
<keyword id="KW-1185">Reference proteome</keyword>
<keyword id="KW-0964">Secreted</keyword>
<keyword id="KW-0732">Signal</keyword>
<keyword id="KW-0865">Zymogen</keyword>
<sequence>MVNSKTVVSALALSALAAAAPAPSSTTSFSINQVAVKKPAIHPAVKYAKALAKYHAEIPSNVASAAASAQSGSATNKPTADDEEYVTPITAGSSTLHLDFDTGSADLWTYSASTRGVGSHSTYDTSTGKKVSGASWQISYGDGSSASGVVYKDKVVVGGVTASSQAVEVATQVSSEFSQDTSNDGLLGLAFSSINTVSPTPQKTFYDNVKSSLAKPVFAVTLKHQAPGTYDFGFIDKSKYKGSLAYTNVDNSQGFWQFTADGYSIGGSGGGSSFSAIADTGTTLVLLDDSIVDEYYSQVQGAQNDSSQGGYVFDCSADLPDFGVQIGDYTAVIPGKYINYASTGSTCFGGIQSNSGIGFSILGDVFLKSQYVVFDGDNLQLGFAAQA</sequence>
<accession>B8MF81</accession>